<gene>
    <name evidence="1" type="primary">torD</name>
    <name type="ordered locus">ECH74115_1234</name>
</gene>
<organism>
    <name type="scientific">Escherichia coli O157:H7 (strain EC4115 / EHEC)</name>
    <dbReference type="NCBI Taxonomy" id="444450"/>
    <lineage>
        <taxon>Bacteria</taxon>
        <taxon>Pseudomonadati</taxon>
        <taxon>Pseudomonadota</taxon>
        <taxon>Gammaproteobacteria</taxon>
        <taxon>Enterobacterales</taxon>
        <taxon>Enterobacteriaceae</taxon>
        <taxon>Escherichia</taxon>
    </lineage>
</organism>
<proteinExistence type="inferred from homology"/>
<protein>
    <recommendedName>
        <fullName evidence="1">Chaperone protein TorD</fullName>
    </recommendedName>
</protein>
<name>TORD_ECO5E</name>
<dbReference type="EMBL" id="CP001164">
    <property type="protein sequence ID" value="ACI38250.1"/>
    <property type="molecule type" value="Genomic_DNA"/>
</dbReference>
<dbReference type="RefSeq" id="WP_000209883.1">
    <property type="nucleotide sequence ID" value="NC_011353.1"/>
</dbReference>
<dbReference type="SMR" id="B5YU41"/>
<dbReference type="KEGG" id="ecf:ECH74115_1234"/>
<dbReference type="HOGENOM" id="CLU_077650_4_0_6"/>
<dbReference type="GO" id="GO:0005737">
    <property type="term" value="C:cytoplasm"/>
    <property type="evidence" value="ECO:0007669"/>
    <property type="project" value="UniProtKB-SubCell"/>
</dbReference>
<dbReference type="GO" id="GO:0051259">
    <property type="term" value="P:protein complex oligomerization"/>
    <property type="evidence" value="ECO:0007669"/>
    <property type="project" value="InterPro"/>
</dbReference>
<dbReference type="GO" id="GO:0006457">
    <property type="term" value="P:protein folding"/>
    <property type="evidence" value="ECO:0007669"/>
    <property type="project" value="UniProtKB-UniRule"/>
</dbReference>
<dbReference type="FunFam" id="1.20.120.1820:FF:000001">
    <property type="entry name" value="Chaperone protein TorD"/>
    <property type="match status" value="1"/>
</dbReference>
<dbReference type="Gene3D" id="1.20.120.1820">
    <property type="match status" value="1"/>
</dbReference>
<dbReference type="Gene3D" id="1.20.1280.20">
    <property type="entry name" value="HscB, C-terminal domain"/>
    <property type="match status" value="1"/>
</dbReference>
<dbReference type="HAMAP" id="MF_01150">
    <property type="entry name" value="TorD"/>
    <property type="match status" value="1"/>
</dbReference>
<dbReference type="InterPro" id="IPR023069">
    <property type="entry name" value="Chaperone_TorD"/>
</dbReference>
<dbReference type="InterPro" id="IPR020945">
    <property type="entry name" value="DMSO/NO3_reduct_chaperone"/>
</dbReference>
<dbReference type="InterPro" id="IPR036386">
    <property type="entry name" value="HscB_C_sf"/>
</dbReference>
<dbReference type="InterPro" id="IPR036411">
    <property type="entry name" value="TorD-like_sf"/>
</dbReference>
<dbReference type="InterPro" id="IPR050289">
    <property type="entry name" value="TorD/DmsD_chaperones"/>
</dbReference>
<dbReference type="NCBIfam" id="NF003442">
    <property type="entry name" value="PRK04976.1"/>
    <property type="match status" value="1"/>
</dbReference>
<dbReference type="PANTHER" id="PTHR34227:SF11">
    <property type="entry name" value="CHAPERONE PROTEIN TORD"/>
    <property type="match status" value="1"/>
</dbReference>
<dbReference type="PANTHER" id="PTHR34227">
    <property type="entry name" value="CHAPERONE PROTEIN YCDY"/>
    <property type="match status" value="1"/>
</dbReference>
<dbReference type="Pfam" id="PF02613">
    <property type="entry name" value="Nitrate_red_del"/>
    <property type="match status" value="1"/>
</dbReference>
<dbReference type="SUPFAM" id="SSF89155">
    <property type="entry name" value="TorD-like"/>
    <property type="match status" value="1"/>
</dbReference>
<feature type="chain" id="PRO_1000137504" description="Chaperone protein TorD">
    <location>
        <begin position="1"/>
        <end position="199"/>
    </location>
</feature>
<comment type="function">
    <text evidence="1">Involved in the biogenesis of TorA. Acts on TorA before the insertion of the molybdenum cofactor and, as a result, probably favors a conformation of the apoenzyme that is competent for acquiring the cofactor.</text>
</comment>
<comment type="subcellular location">
    <subcellularLocation>
        <location evidence="1">Cytoplasm</location>
    </subcellularLocation>
</comment>
<comment type="similarity">
    <text evidence="1">Belongs to the TorD/DmsD family. TorD subfamily.</text>
</comment>
<evidence type="ECO:0000255" key="1">
    <source>
        <dbReference type="HAMAP-Rule" id="MF_01150"/>
    </source>
</evidence>
<sequence>MTTLTAQQIACVYAWLAQLFSRELDDEQLTQIASAQMAEWFSLLKSEPPLTAAVDELENRVATLTVRDDARLELAADFCGLFLMTDKQAALPYASAYKQDEQEIKRLLVEAGMETSGNFNEPTDHLAIYLELLSHLHFSLGEGTVPARRIDSLRQKTLTALRQWLPEFVARCHQYDSFGFYAALSQLLLVLVEGDHQNR</sequence>
<accession>B5YU41</accession>
<keyword id="KW-0143">Chaperone</keyword>
<keyword id="KW-0963">Cytoplasm</keyword>
<reference key="1">
    <citation type="journal article" date="2011" name="Proc. Natl. Acad. Sci. U.S.A.">
        <title>Genomic anatomy of Escherichia coli O157:H7 outbreaks.</title>
        <authorList>
            <person name="Eppinger M."/>
            <person name="Mammel M.K."/>
            <person name="Leclerc J.E."/>
            <person name="Ravel J."/>
            <person name="Cebula T.A."/>
        </authorList>
    </citation>
    <scope>NUCLEOTIDE SEQUENCE [LARGE SCALE GENOMIC DNA]</scope>
    <source>
        <strain>EC4115 / EHEC</strain>
    </source>
</reference>